<gene>
    <name evidence="1" type="primary">tsaD</name>
    <name type="synonym">gcp</name>
    <name type="ordered locus">Bphy_3946</name>
</gene>
<name>TSAD_PARP8</name>
<proteinExistence type="inferred from homology"/>
<protein>
    <recommendedName>
        <fullName evidence="1">tRNA N6-adenosine threonylcarbamoyltransferase</fullName>
        <ecNumber evidence="1">2.3.1.234</ecNumber>
    </recommendedName>
    <alternativeName>
        <fullName evidence="1">N6-L-threonylcarbamoyladenine synthase</fullName>
        <shortName evidence="1">t(6)A synthase</shortName>
    </alternativeName>
    <alternativeName>
        <fullName evidence="1">t(6)A37 threonylcarbamoyladenosine biosynthesis protein TsaD</fullName>
    </alternativeName>
    <alternativeName>
        <fullName evidence="1">tRNA threonylcarbamoyladenosine biosynthesis protein TsaD</fullName>
    </alternativeName>
</protein>
<reference key="1">
    <citation type="journal article" date="2014" name="Stand. Genomic Sci.">
        <title>Complete genome sequence of Burkholderia phymatum STM815(T), a broad host range and efficient nitrogen-fixing symbiont of Mimosa species.</title>
        <authorList>
            <person name="Moulin L."/>
            <person name="Klonowska A."/>
            <person name="Caroline B."/>
            <person name="Booth K."/>
            <person name="Vriezen J.A."/>
            <person name="Melkonian R."/>
            <person name="James E.K."/>
            <person name="Young J.P."/>
            <person name="Bena G."/>
            <person name="Hauser L."/>
            <person name="Land M."/>
            <person name="Kyrpides N."/>
            <person name="Bruce D."/>
            <person name="Chain P."/>
            <person name="Copeland A."/>
            <person name="Pitluck S."/>
            <person name="Woyke T."/>
            <person name="Lizotte-Waniewski M."/>
            <person name="Bristow J."/>
            <person name="Riley M."/>
        </authorList>
    </citation>
    <scope>NUCLEOTIDE SEQUENCE [LARGE SCALE GENOMIC DNA]</scope>
    <source>
        <strain>DSM 17167 / CIP 108236 / LMG 21445 / STM815</strain>
    </source>
</reference>
<keyword id="KW-0012">Acyltransferase</keyword>
<keyword id="KW-0963">Cytoplasm</keyword>
<keyword id="KW-0408">Iron</keyword>
<keyword id="KW-0479">Metal-binding</keyword>
<keyword id="KW-1185">Reference proteome</keyword>
<keyword id="KW-0808">Transferase</keyword>
<keyword id="KW-0819">tRNA processing</keyword>
<sequence length="341" mass="35962">MLVLGIESSCDETGLALYDTERGLLAHALHSQIAMHREYGGVVPELASRDHIRRALPLLEEVLERSGAARGDIDAIAYTQGPGLAGALLVGASIANSLAMAWNKPTIGIHHLEGHLLSPLLVDEPPPFPFVALLVSGGHTQLMRVTDVGVYETLGETLDDAAGEAFDKTAKLLGLGYPGGPEVSRLAEFGTPGAVVLPRPMLHSGDLDFSFSGLKTAVLTHVKKLGGNVCEQAKADLARGFVDAAVEVLAVKSLAALKKTKLKRLVVAGGVGANRQLREALSSAAQKRGFAVHYPDLSLCTDNGAMIALAGALRMQRWPAQATDDYAFTVKPRWDLGSLGA</sequence>
<accession>B2JP66</accession>
<comment type="function">
    <text evidence="1">Required for the formation of a threonylcarbamoyl group on adenosine at position 37 (t(6)A37) in tRNAs that read codons beginning with adenine. Is involved in the transfer of the threonylcarbamoyl moiety of threonylcarbamoyl-AMP (TC-AMP) to the N6 group of A37, together with TsaE and TsaB. TsaD likely plays a direct catalytic role in this reaction.</text>
</comment>
<comment type="catalytic activity">
    <reaction evidence="1">
        <text>L-threonylcarbamoyladenylate + adenosine(37) in tRNA = N(6)-L-threonylcarbamoyladenosine(37) in tRNA + AMP + H(+)</text>
        <dbReference type="Rhea" id="RHEA:37059"/>
        <dbReference type="Rhea" id="RHEA-COMP:10162"/>
        <dbReference type="Rhea" id="RHEA-COMP:10163"/>
        <dbReference type="ChEBI" id="CHEBI:15378"/>
        <dbReference type="ChEBI" id="CHEBI:73682"/>
        <dbReference type="ChEBI" id="CHEBI:74411"/>
        <dbReference type="ChEBI" id="CHEBI:74418"/>
        <dbReference type="ChEBI" id="CHEBI:456215"/>
        <dbReference type="EC" id="2.3.1.234"/>
    </reaction>
</comment>
<comment type="cofactor">
    <cofactor evidence="1">
        <name>Fe(2+)</name>
        <dbReference type="ChEBI" id="CHEBI:29033"/>
    </cofactor>
    <text evidence="1">Binds 1 Fe(2+) ion per subunit.</text>
</comment>
<comment type="subcellular location">
    <subcellularLocation>
        <location evidence="1">Cytoplasm</location>
    </subcellularLocation>
</comment>
<comment type="similarity">
    <text evidence="1">Belongs to the KAE1 / TsaD family.</text>
</comment>
<organism>
    <name type="scientific">Paraburkholderia phymatum (strain DSM 17167 / CIP 108236 / LMG 21445 / STM815)</name>
    <name type="common">Burkholderia phymatum</name>
    <dbReference type="NCBI Taxonomy" id="391038"/>
    <lineage>
        <taxon>Bacteria</taxon>
        <taxon>Pseudomonadati</taxon>
        <taxon>Pseudomonadota</taxon>
        <taxon>Betaproteobacteria</taxon>
        <taxon>Burkholderiales</taxon>
        <taxon>Burkholderiaceae</taxon>
        <taxon>Paraburkholderia</taxon>
    </lineage>
</organism>
<evidence type="ECO:0000255" key="1">
    <source>
        <dbReference type="HAMAP-Rule" id="MF_01445"/>
    </source>
</evidence>
<feature type="chain" id="PRO_1000145958" description="tRNA N6-adenosine threonylcarbamoyltransferase">
    <location>
        <begin position="1"/>
        <end position="341"/>
    </location>
</feature>
<feature type="binding site" evidence="1">
    <location>
        <position position="111"/>
    </location>
    <ligand>
        <name>Fe cation</name>
        <dbReference type="ChEBI" id="CHEBI:24875"/>
    </ligand>
</feature>
<feature type="binding site" evidence="1">
    <location>
        <position position="115"/>
    </location>
    <ligand>
        <name>Fe cation</name>
        <dbReference type="ChEBI" id="CHEBI:24875"/>
    </ligand>
</feature>
<feature type="binding site" evidence="1">
    <location>
        <begin position="134"/>
        <end position="138"/>
    </location>
    <ligand>
        <name>substrate</name>
    </ligand>
</feature>
<feature type="binding site" evidence="1">
    <location>
        <position position="167"/>
    </location>
    <ligand>
        <name>substrate</name>
    </ligand>
</feature>
<feature type="binding site" evidence="1">
    <location>
        <position position="180"/>
    </location>
    <ligand>
        <name>substrate</name>
    </ligand>
</feature>
<feature type="binding site" evidence="1">
    <location>
        <position position="274"/>
    </location>
    <ligand>
        <name>substrate</name>
    </ligand>
</feature>
<feature type="binding site" evidence="1">
    <location>
        <position position="302"/>
    </location>
    <ligand>
        <name>Fe cation</name>
        <dbReference type="ChEBI" id="CHEBI:24875"/>
    </ligand>
</feature>
<dbReference type="EC" id="2.3.1.234" evidence="1"/>
<dbReference type="EMBL" id="CP001044">
    <property type="protein sequence ID" value="ACC73069.1"/>
    <property type="molecule type" value="Genomic_DNA"/>
</dbReference>
<dbReference type="RefSeq" id="WP_012403242.1">
    <property type="nucleotide sequence ID" value="NC_010623.1"/>
</dbReference>
<dbReference type="SMR" id="B2JP66"/>
<dbReference type="STRING" id="391038.Bphy_3946"/>
<dbReference type="KEGG" id="bph:Bphy_3946"/>
<dbReference type="eggNOG" id="COG0533">
    <property type="taxonomic scope" value="Bacteria"/>
</dbReference>
<dbReference type="HOGENOM" id="CLU_023208_0_0_4"/>
<dbReference type="OrthoDB" id="9806197at2"/>
<dbReference type="Proteomes" id="UP000001192">
    <property type="component" value="Chromosome 2"/>
</dbReference>
<dbReference type="GO" id="GO:0005737">
    <property type="term" value="C:cytoplasm"/>
    <property type="evidence" value="ECO:0007669"/>
    <property type="project" value="UniProtKB-SubCell"/>
</dbReference>
<dbReference type="GO" id="GO:0005506">
    <property type="term" value="F:iron ion binding"/>
    <property type="evidence" value="ECO:0007669"/>
    <property type="project" value="UniProtKB-UniRule"/>
</dbReference>
<dbReference type="GO" id="GO:0061711">
    <property type="term" value="F:N(6)-L-threonylcarbamoyladenine synthase activity"/>
    <property type="evidence" value="ECO:0007669"/>
    <property type="project" value="UniProtKB-EC"/>
</dbReference>
<dbReference type="GO" id="GO:0002949">
    <property type="term" value="P:tRNA threonylcarbamoyladenosine modification"/>
    <property type="evidence" value="ECO:0007669"/>
    <property type="project" value="UniProtKB-UniRule"/>
</dbReference>
<dbReference type="CDD" id="cd24133">
    <property type="entry name" value="ASKHA_NBD_TsaD_bac"/>
    <property type="match status" value="1"/>
</dbReference>
<dbReference type="FunFam" id="3.30.420.40:FF:000012">
    <property type="entry name" value="tRNA N6-adenosine threonylcarbamoyltransferase"/>
    <property type="match status" value="1"/>
</dbReference>
<dbReference type="FunFam" id="3.30.420.40:FF:000040">
    <property type="entry name" value="tRNA N6-adenosine threonylcarbamoyltransferase"/>
    <property type="match status" value="1"/>
</dbReference>
<dbReference type="Gene3D" id="3.30.420.40">
    <property type="match status" value="2"/>
</dbReference>
<dbReference type="HAMAP" id="MF_01445">
    <property type="entry name" value="TsaD"/>
    <property type="match status" value="1"/>
</dbReference>
<dbReference type="InterPro" id="IPR043129">
    <property type="entry name" value="ATPase_NBD"/>
</dbReference>
<dbReference type="InterPro" id="IPR000905">
    <property type="entry name" value="Gcp-like_dom"/>
</dbReference>
<dbReference type="InterPro" id="IPR017861">
    <property type="entry name" value="KAE1/TsaD"/>
</dbReference>
<dbReference type="InterPro" id="IPR022450">
    <property type="entry name" value="TsaD"/>
</dbReference>
<dbReference type="NCBIfam" id="TIGR00329">
    <property type="entry name" value="gcp_kae1"/>
    <property type="match status" value="1"/>
</dbReference>
<dbReference type="NCBIfam" id="TIGR03723">
    <property type="entry name" value="T6A_TsaD_YgjD"/>
    <property type="match status" value="1"/>
</dbReference>
<dbReference type="PANTHER" id="PTHR11735">
    <property type="entry name" value="TRNA N6-ADENOSINE THREONYLCARBAMOYLTRANSFERASE"/>
    <property type="match status" value="1"/>
</dbReference>
<dbReference type="PANTHER" id="PTHR11735:SF6">
    <property type="entry name" value="TRNA N6-ADENOSINE THREONYLCARBAMOYLTRANSFERASE, MITOCHONDRIAL"/>
    <property type="match status" value="1"/>
</dbReference>
<dbReference type="Pfam" id="PF00814">
    <property type="entry name" value="TsaD"/>
    <property type="match status" value="1"/>
</dbReference>
<dbReference type="PRINTS" id="PR00789">
    <property type="entry name" value="OSIALOPTASE"/>
</dbReference>
<dbReference type="SUPFAM" id="SSF53067">
    <property type="entry name" value="Actin-like ATPase domain"/>
    <property type="match status" value="2"/>
</dbReference>